<evidence type="ECO:0000255" key="1"/>
<evidence type="ECO:0000255" key="2">
    <source>
        <dbReference type="PROSITE-ProRule" id="PRU00258"/>
    </source>
</evidence>
<evidence type="ECO:0000255" key="3">
    <source>
        <dbReference type="PROSITE-ProRule" id="PRU01348"/>
    </source>
</evidence>
<evidence type="ECO:0000255" key="4">
    <source>
        <dbReference type="PROSITE-ProRule" id="PRU01363"/>
    </source>
</evidence>
<evidence type="ECO:0000256" key="5">
    <source>
        <dbReference type="SAM" id="MobiDB-lite"/>
    </source>
</evidence>
<evidence type="ECO:0000269" key="6">
    <source>
    </source>
</evidence>
<evidence type="ECO:0000303" key="7">
    <source>
    </source>
</evidence>
<evidence type="ECO:0000305" key="8"/>
<evidence type="ECO:0000305" key="9">
    <source>
    </source>
</evidence>
<keyword id="KW-0436">Ligase</keyword>
<keyword id="KW-0489">Methyltransferase</keyword>
<keyword id="KW-0511">Multifunctional enzyme</keyword>
<keyword id="KW-0560">Oxidoreductase</keyword>
<keyword id="KW-0596">Phosphopantetheine</keyword>
<keyword id="KW-0597">Phosphoprotein</keyword>
<keyword id="KW-1185">Reference proteome</keyword>
<keyword id="KW-0677">Repeat</keyword>
<keyword id="KW-0808">Transferase</keyword>
<reference key="1">
    <citation type="journal article" date="2015" name="Genome Announc.">
        <title>Draft genome sequence of the cellulolytic fungus Chaetomium globosum.</title>
        <authorList>
            <person name="Cuomo C.A."/>
            <person name="Untereiner W.A."/>
            <person name="Ma L.-J."/>
            <person name="Grabherr M."/>
            <person name="Birren B.W."/>
        </authorList>
    </citation>
    <scope>NUCLEOTIDE SEQUENCE [LARGE SCALE GENOMIC DNA]</scope>
    <source>
        <strain>ATCC 6205 / CBS 148.51 / DSM 1962 / NBRC 6347 / NRRL 1970</strain>
    </source>
</reference>
<reference key="2">
    <citation type="journal article" date="2015" name="ChemBioChem">
        <title>Involvement of lipocalin-like CghA in decalin-forming stereoselective intramolecular [4+2] cycloaddition.</title>
        <authorList>
            <person name="Sato M."/>
            <person name="Yagishita F."/>
            <person name="Mino T."/>
            <person name="Uchiyama N."/>
            <person name="Patel A."/>
            <person name="Chooi Y.H."/>
            <person name="Goda Y."/>
            <person name="Xu W."/>
            <person name="Noguchi H."/>
            <person name="Yamamoto T."/>
            <person name="Hotta K."/>
            <person name="Houk K.N."/>
            <person name="Tang Y."/>
            <person name="Watanabe K."/>
        </authorList>
    </citation>
    <scope>FUNCTION</scope>
    <scope>CATALYTIC ACTIVITY</scope>
    <scope>DOMAIN</scope>
    <scope>PATHWAY</scope>
</reference>
<sequence length="4017" mass="434809">MSAADQEPIAVIGMACRFPGGSNSPSKLWELLKAPHDIAKPIPDDRFDSTGFFHKNGSHHGATDCREAYFLDEDVTRFDNAFFNVQPGEAEALDPQQRFLMETIYDSLCSAGQTIEGLRGSRAAVYVGLMCDDWSQMNGRDWDLVPTYAATGTSRAVVSNRVSYFFDWHGPSMTIDTACSSSLVAVHEGVNALRRGESPIVVAAGANMILSPGMMIAESNLHMLSPTGRSKMWDASADGYARGEGIAAVVLKPLSAALRDGDPINCVIRGTGVNQDGRTPGLTMPNNVAQADLIRDTYERAGLNIQDPKDRPQFFHAHGTGTPAGDPQEAEAISRAFYEGGSVKDPLFVGSIKTVIGHTEGTAGLASLIGTALAMQNNTIPPNLHFNTLSPRVAEFCDNLRIPTKALPWPTPVAGQPRRASVNSFGFGGTNAHAIIESYEAAPTEQRTVSTKVPAFTPLTISAASASALRTTLSDLSAYVLSHPDTDLRDLAYTFQHRRSTLAFRKAIATDNRDALVGTIDALLNEGGAGDGGLTARYFDSPDPKILGVFTGQGAQWPRMGALLLEQSPYVGELLTQLDQALATLPEGDRPDWTLREQILAEAAQSRLSEAAISQPLCTAVQIALVDLLGLAGIRLRGVVGHSSGEIAAAYASGYLSATDAIRVAYYRGLYAKLAGSPAGRGSMLAVGTSFEDAVEFCELEEFEGRIKVAARNSSNSVTLSGDEDAIEEALEIYKDEGRFARQLRVDTAYHSHHMEPCAVPYRDALTRCEIKVGEGNGIPWYSSVIEGHVMAPTDVSPQYWVDNMTSAVLFSPAVAHAVAEGGPFDLGVEVGPHPALKGPCLDTVEEAAGHRIPYTGLLGRNKNDVVELSSALGFIWTQLGAASVDFDRLERAISGNPYPKKVVDDLPTYPFDHSRSFYTLTRFSGAHRNMHAPPNPILGRRCVETETADEVSWRNILKSGEISWLQGHQLQGQTVFPAMGYIAMCVEAAAVLAGPERPLGLVTLEDVIIGRALAFQNESVGMESKVTVKIDHTSDDELRGHIACHSGLPFDSAAPLALNFSATLHVRFHEPRADTLPAVRADEISLVKTDPGRLYSQFTQLGYNYSPPFTGVKAIQRKRGFATGDIEDISGEGWEDQLIVHPGWLDSALQTAFAAYSYPHDNRLWALHVPTEIRTVSINPYFTERGAGGRTRQLQYQSTAREGLGAPVAADIDVFAAGEEDGHAFIQLEAVQVKPFAAATARDDALLFARFDYRLANPDAIAAVEGDDLLPPKTEAVVETIERVGFYYLRRVHETVTPAERRPTLPHFRHLIDLCGRVVPLVAAGEHPHVPREAINDSASYIRSLIARYHDRADIQLLEAVGENLVGEIRRNGIMLEHMMKDGILDRFYEELAGLDVANVWIARMVAQVAHRHPHLRILEIGAGTGGTTRTVLPMLGDAFQSYTFTDISAGFFGSAQERFRTYADRMVFATYNMELTPEEQGFEEGTYDVVLASNVLHATGRLDDMMANTRRLLRPGGYLMMLEFVSNDRTGITACMGGLPGWWGNGIVDPARGDGPCLTPAQWDELVRRHGFSGVDTHCPVEKHLQWYTVHLCQAVDDRVLALRNPLESLESAATLAPPPAELVIVGGTTATVSKLIDEASTLLAPRYNTISRVATLEELDQRGLPLGSSVLSLTELDHQFFEHRTAAKLEALKALWRAGGSIIWATRGVRDASPYSAMILGLARVVRFEYPNINLQILDFDRAPDAATLAADLVRLEMGRHWKEEGANILYSVEPEAHYENGALFIPRMYPDRDANARYNTQRRTVAREVDPRETSVVLEPAGPVGGALELCAPSPLRVAPAARPGAEKTVEVIVEQSVLHAVKVPDAGFFSLCAGTDAETGRPLLALVDSPVESRLRVPVEWTVSLREPLSRTGAFSLGDVASHLVASAILAGAPAFGSLLIHEADESLKEAFGRQAAGHGAHVVFTTADKAKARAGADWVLVHEKLPGRLVQRLLPHDISSFTDLSHSEGSASAQLIVHSLPVYSPITTVKDVIRAQAGAFPDAAPQDVGAALKAAWQAASRKRKGSGNKSQTSAIPVLPLQDVSRAGARHAPLTVVDWNTNSVSVALRPIDAGTIFRSDGTYFLVGLSGEVGQSLCQWMVAHGARHIVLSSRRPKVHPRYIEDLAALGATVRVMALDITNREALRACYDTXXXXXXXXXXXXXXXXXXXXXXXXXXXXXXXXXXXXXXXXXXXXXXXXXXXXXXXXXXXXXXXXXXXXXXXXXXXXXXXXXXXXXXXXXXXXXXXXXXXXXXXXXXXXXXXXXXXXXXXXXXXXXXXXXXXXXXXXXXXXXXXXXXXXXXXXXXXXXXXXXXXXXXXXXXXXXXXXXXXXXXXXXXXXXXXXXXXXXXXXXXXXXXXXXXXXXXXXXXXXXXXXXXAVVQDSLTENLIRILMMPATETVDPMMSLVELGIDSIMAVDLRTWFLKELDVDVPVLKILSPGETVKSLAEEAMAKIPAEIVDLSKLAEGSADVSGAPAPAAVQPVQPAPVPVPVPVTKKAIDQVSEASGVSATTPSTRAETDASSSPALVSTPGTSLERPDQEEDKQLFQPPPRPKPTTLQHRLPRQAYWAGSASTTSPKPSRRAAQRHETLRTRFFWSTDDSRTPMQGILSQTLVRLETATIETEAQASEELEAMRKYEWNLGDWVPLRIKLLTLSETSHYLILGSHHISMDGHSFSVFLLDIHQAYNNPARPLPPMPSTSQARAFGAHQIAAYESGQMRPAIEHYKTTLPAADLARPIELFPFARTKVRPPLDRYGTHVARAHLGPDTTAKLKTLARGRRATSFHAYLGALQALLFRLLPADTTERVYIGIADANRLDSRFAASVGNFLNVLPLRFDRDAATFGQAIETARDKARDALKHSALPFDLLLDEVGVPRSPTLLIRCIVFMNYRLVVKEHADKQWIGCRIGEERWHTARTGYDVALEIVEDHDGATLAMHVQQSLYDADAAELLVRSFANAVKEFAAKGDAMETEKLQKWDKVDVEKALEIGTGPALNLKWPATVAHRIDEVIAQNPTAVALKDGLGNVLTYAQMDARVESIANALNVRLPNNADGKAPVVGVFQAPSADWICSLVAIHRVGAVYLPLDLRNSIPRLKSNVAVARPAALLVDAETASRVGELEIKDAVPAIDVSRLAADTKGKKPTNTAAARADQPAYIIFTSGSTGEPKGIVVTHAGLRNNLEGYHNAWNIPSLAGVVLQQVSFGFDALSASDLCLRXXXXXXXXXXLMVDHGVTMTQATPSEYEMWLRFAPDQLRRCTSWKAAWFGGERAAPGLVRSFRDLCVALPNLNVYTSYGPTESTISAMKGVADVRNDPTLTVPVPGRLLPNYTAYLVDDEMRPLPIGVPGEILLGGAGVGKNEYLGRPDLTTQAFLSSPFPVPGDGGKPARLYRTGDYGRLDKSGFLAIEGRIAGDTQVKLRGFRIELAEIERVMLRESDGQLAQVVVTARGVDDGEAEGFLAAHVVLESQSTDAAATAQVINRLRSRLPLSLPQYMCPAIIVPLAKLPLTSNDKVDRRAVQALSLPKTTTASTTADGTQPAQPLTPTESRLATLWAGVLPQRGGGVLQPRSDFFTAGGNSLLLVKLQAAIKREFGDAPRLSKLMSATELGSMAALLDQAGATALDWERETALDLPQGVTAPAKARENGAGLRVLVTGASGSLGKRIVRRLVGDNRVATVVCLVRPTEGRDPSTLFFAAGQADNAKIRTILADLPTIPTTHPDLDPAIIDAVIHCAADRSFWDGYSAVSLSTSTRSRPRCSLLTAGAHLHALSSGALGAFEDPNTYNTKSTLPRPSPTDGYLASKWVAERYLARAVREAGLRATAHRPSGAVPASEREGKEVLAAMAGDMLRLSASLGVRPDYARLSGSFDVGRLEDVAAAVVGEVTGGLGGQGGEEGMGVVEYPGMASVQIRELAEYAEMLLKNGGAEAEAVKGLPMVPALHWVGLAKRAGLFEWLLTAQHLVVDDEEGRKIVSRR</sequence>
<accession>Q2HBN0</accession>
<accession>Q2HBM6</accession>
<accession>Q2HBM7</accession>
<accession>Q2HBM8</accession>
<accession>Q2HBM9</accession>
<name>CGHG_CHAGB</name>
<protein>
    <recommendedName>
        <fullName evidence="7">Hybrid PKS-NRPS synthetase cghG</fullName>
        <shortName evidence="7">PKS-NRPS cghG</shortName>
        <ecNumber evidence="6">2.3.1.-</ecNumber>
        <ecNumber evidence="6">6.3.2.-</ecNumber>
    </recommendedName>
    <alternativeName>
        <fullName evidence="7">Sch210972 biosynthesis cluster protein G</fullName>
    </alternativeName>
</protein>
<gene>
    <name evidence="7" type="primary">cghG</name>
    <name type="ORF">CHGG_02374</name>
    <name type="ORF">CHGG_02375</name>
    <name type="ORF">CHGG_02376</name>
    <name type="ORF">CHGG_02377</name>
    <name type="ORF">CHGG_02378</name>
</gene>
<organism>
    <name type="scientific">Chaetomium globosum (strain ATCC 6205 / CBS 148.51 / DSM 1962 / NBRC 6347 / NRRL 1970)</name>
    <name type="common">Soil fungus</name>
    <dbReference type="NCBI Taxonomy" id="306901"/>
    <lineage>
        <taxon>Eukaryota</taxon>
        <taxon>Fungi</taxon>
        <taxon>Dikarya</taxon>
        <taxon>Ascomycota</taxon>
        <taxon>Pezizomycotina</taxon>
        <taxon>Sordariomycetes</taxon>
        <taxon>Sordariomycetidae</taxon>
        <taxon>Sordariales</taxon>
        <taxon>Chaetomiaceae</taxon>
        <taxon>Chaetomium</taxon>
    </lineage>
</organism>
<comment type="function">
    <text evidence="6">Hybrid PKS-NRPS synthetase; part of the gene cluster that mediates the biosynthesis of the tetramic acid Sch210972, a potential anti-HIV fungal natural product that contains a decalin core (PubMed:26360642). The PKS module of cghG together with the enoylreductase cghC catalyze the formation of the polyketide unit which is then conjugated to 4-hydroxyl-4-methyl glutamate (HMG) by the condensation domain of the cghG NRPS module (PubMed:26360642). One unique structural feature of Sch210972 is the tetramic acid motif proposed to be derived from the non-proteinogenic amino acid HMG, by a Dieckmann-type condensation catalyzed by the reductase domain of cghG (PubMed:26360642). The aldolase cghB catalyzes the aldol condensation of 2 molecules of pyruvic acid to yield the intermediate 4-hydroxyl-4-methyl-2-oxoglutarate (HMOG), which can then be stereoselectively transaminated by an unidentified enzyme to form HMG (PubMed:26360642). The Diels-Alderase cghA then uses the Dieckmann product released by cghG as substrate and catalyzes the Diels-Alder cycloaddition to form the decalin ring of Sch210972 (PubMed:26360642). CghA also suppresses the nonenzymatic formation of the alternative stereoisomer (PubMed:26360642).</text>
</comment>
<comment type="catalytic activity">
    <reaction evidence="6">
        <text>(2S,4S)-4-hydroxy-4-methylglutamate + 8 malonyl-CoA + 3 S-adenosyl-L-methionine + ATP + 8 NADPH + 11 H(+) = (2S)-3-[(2S)-3,5-dioxo-4-[(2E,4R,6R,8E,10E,12E)-4,6,12-trimethyltetradeca-2,8,10,12-tetraenoyl]pyrrolidin-2-yl]-2-hydroxy-2-methylpropanoate + AMP + 3 S-adenosyl-L-homocysteine + 8 CO2 + diphosphate + 8 NADP(+) + 8 CoA + 6 H2O</text>
        <dbReference type="Rhea" id="RHEA:67264"/>
        <dbReference type="ChEBI" id="CHEBI:15377"/>
        <dbReference type="ChEBI" id="CHEBI:15378"/>
        <dbReference type="ChEBI" id="CHEBI:16526"/>
        <dbReference type="ChEBI" id="CHEBI:30616"/>
        <dbReference type="ChEBI" id="CHEBI:33019"/>
        <dbReference type="ChEBI" id="CHEBI:57287"/>
        <dbReference type="ChEBI" id="CHEBI:57384"/>
        <dbReference type="ChEBI" id="CHEBI:57783"/>
        <dbReference type="ChEBI" id="CHEBI:57856"/>
        <dbReference type="ChEBI" id="CHEBI:58349"/>
        <dbReference type="ChEBI" id="CHEBI:59789"/>
        <dbReference type="ChEBI" id="CHEBI:167901"/>
        <dbReference type="ChEBI" id="CHEBI:167907"/>
        <dbReference type="ChEBI" id="CHEBI:456215"/>
    </reaction>
    <physiologicalReaction direction="left-to-right" evidence="6">
        <dbReference type="Rhea" id="RHEA:67265"/>
    </physiologicalReaction>
</comment>
<comment type="pathway">
    <text evidence="6">Secondary metabolite biosynthesis.</text>
</comment>
<comment type="domain">
    <text evidence="9">NRP synthetases are composed of discrete domains (adenylation (A), thiolation (T) or peptidyl carrier protein (PCP) and condensation (C) domains) which when grouped together are referred to as a single module. Each module is responsible for the recognition (via the A domain) and incorporation of a single amino acid into the growing peptide product. Thus, an NRP synthetase is generally composed of one or more modules and can terminate in a thioesterase domain (TE) that releases the newly synthesized peptide from the enzyme. Occasionally, epimerase (E) domains (responsible for L- to D- amino acid conversion) are present within the NRP synthetase. CcsA also contains a polyketide synthase module (PKS) consisting of several catalytic domains including a ketoacyl synthase domain (KS), an acyl transferase domain (AT), a dehydratase domain (DH), a methyltransferase domain (MT), and a ketoreductase domain (KR). Instead of a thioesterase domain (TE), cghG finishes with a reductase-like domain (R) for peptide release. CghG has the following architecture: KS-MAT-DH-MT-KR-PCP-C-A-T-R.</text>
</comment>
<comment type="similarity">
    <text evidence="8">In the C-terminal section; belongs to the NRP synthetase family.</text>
</comment>
<comment type="sequence caution" evidence="8">
    <conflict type="erroneous gene model prediction">
        <sequence resource="EMBL-CDS" id="EAQ90439"/>
    </conflict>
</comment>
<comment type="sequence caution" evidence="8">
    <conflict type="erroneous gene model prediction">
        <sequence resource="EMBL-CDS" id="EAQ90440"/>
    </conflict>
</comment>
<comment type="sequence caution" evidence="8">
    <conflict type="erroneous gene model prediction">
        <sequence resource="EMBL-CDS" id="EAQ90441"/>
    </conflict>
</comment>
<comment type="sequence caution" evidence="8">
    <conflict type="erroneous gene model prediction">
        <sequence resource="EMBL-CDS" id="EAQ90442"/>
    </conflict>
</comment>
<comment type="sequence caution" evidence="8">
    <conflict type="erroneous gene model prediction">
        <sequence resource="EMBL-CDS" id="EAQ90443"/>
    </conflict>
</comment>
<proteinExistence type="evidence at protein level"/>
<feature type="chain" id="PRO_0000453331" description="Hybrid PKS-NRPS synthetase cghG">
    <location>
        <begin position="1"/>
        <end position="4017"/>
    </location>
</feature>
<feature type="domain" description="Ketosynthase family 3 (KS3)" evidence="3 9">
    <location>
        <begin position="6"/>
        <end position="438"/>
    </location>
</feature>
<feature type="domain" description="PKS/mFAS DH" evidence="4">
    <location>
        <begin position="936"/>
        <end position="1243"/>
    </location>
</feature>
<feature type="domain" description="Carrier 1" evidence="2">
    <location>
        <begin position="2423"/>
        <end position="2499"/>
    </location>
</feature>
<feature type="domain" description="Carrier 2" evidence="2">
    <location>
        <begin position="3583"/>
        <end position="3661"/>
    </location>
</feature>
<feature type="region of interest" description="Malonyl-CoA:ACP transacylase (MAT) domain" evidence="1 9">
    <location>
        <begin position="549"/>
        <end position="869"/>
    </location>
</feature>
<feature type="region of interest" description="N-terminal hotdog fold" evidence="4">
    <location>
        <begin position="936"/>
        <end position="1072"/>
    </location>
</feature>
<feature type="region of interest" description="Dehydratase (DH) domain" evidence="1 9">
    <location>
        <begin position="937"/>
        <end position="1240"/>
    </location>
</feature>
<feature type="region of interest" description="C-terminal hotdog fold" evidence="4">
    <location>
        <begin position="1087"/>
        <end position="1243"/>
    </location>
</feature>
<feature type="region of interest" description="Methyltransferase (MT) domain" evidence="1 9">
    <location>
        <begin position="1398"/>
        <end position="1585"/>
    </location>
</feature>
<feature type="region of interest" description="Ketoreductase (KR)domain" evidence="1 9">
    <location>
        <begin position="2127"/>
        <end position="2300"/>
    </location>
</feature>
<feature type="region of interest" description="Disordered" evidence="5">
    <location>
        <begin position="2547"/>
        <end position="2606"/>
    </location>
</feature>
<feature type="region of interest" description="Disordered" evidence="5">
    <location>
        <begin position="2613"/>
        <end position="2632"/>
    </location>
</feature>
<feature type="region of interest" description="Condensation" evidence="1 9">
    <location>
        <begin position="2626"/>
        <end position="3020"/>
    </location>
</feature>
<feature type="region of interest" description="Adenylation" evidence="1 9">
    <location>
        <begin position="3053"/>
        <end position="3453"/>
    </location>
</feature>
<feature type="region of interest" description="Disordered" evidence="5">
    <location>
        <begin position="3567"/>
        <end position="3586"/>
    </location>
</feature>
<feature type="region of interest" description="Thiolation" evidence="1 9">
    <location>
        <begin position="3588"/>
        <end position="3658"/>
    </location>
</feature>
<feature type="region of interest" description="Reductase-like" evidence="1 9">
    <location>
        <begin position="3696"/>
        <end position="3920"/>
    </location>
</feature>
<feature type="compositionally biased region" description="Polar residues" evidence="5">
    <location>
        <begin position="2548"/>
        <end position="2578"/>
    </location>
</feature>
<feature type="compositionally biased region" description="Low complexity" evidence="5">
    <location>
        <begin position="3569"/>
        <end position="3579"/>
    </location>
</feature>
<feature type="active site" description="For beta-ketoacyl synthase activity" evidence="3">
    <location>
        <position position="179"/>
    </location>
</feature>
<feature type="active site" description="For beta-ketoacyl synthase activity" evidence="3">
    <location>
        <position position="318"/>
    </location>
</feature>
<feature type="active site" description="For beta-ketoacyl synthase activity" evidence="3">
    <location>
        <position position="358"/>
    </location>
</feature>
<feature type="active site" description="Proton acceptor; for dehydratase activity" evidence="4">
    <location>
        <position position="969"/>
    </location>
</feature>
<feature type="active site" description="Proton donor; for dehydratase activity" evidence="4">
    <location>
        <position position="1147"/>
    </location>
</feature>
<feature type="modified residue" description="O-(pantetheine 4'-phosphoryl)serine" evidence="2">
    <location>
        <position position="2458"/>
    </location>
</feature>
<feature type="modified residue" description="O-(pantetheine 4'-phosphoryl)serine" evidence="2">
    <location>
        <position position="3621"/>
    </location>
</feature>
<dbReference type="EC" id="2.3.1.-" evidence="6"/>
<dbReference type="EC" id="6.3.2.-" evidence="6"/>
<dbReference type="EMBL" id="CH408030">
    <property type="protein sequence ID" value="EAQ90439.1"/>
    <property type="status" value="ALT_SEQ"/>
    <property type="molecule type" value="Genomic_DNA"/>
</dbReference>
<dbReference type="EMBL" id="CH408030">
    <property type="protein sequence ID" value="EAQ90440.1"/>
    <property type="status" value="ALT_SEQ"/>
    <property type="molecule type" value="Genomic_DNA"/>
</dbReference>
<dbReference type="EMBL" id="CH408030">
    <property type="protein sequence ID" value="EAQ90441.1"/>
    <property type="status" value="ALT_SEQ"/>
    <property type="molecule type" value="Genomic_DNA"/>
</dbReference>
<dbReference type="EMBL" id="CH408030">
    <property type="protein sequence ID" value="EAQ90442.1"/>
    <property type="status" value="ALT_SEQ"/>
    <property type="molecule type" value="Genomic_DNA"/>
</dbReference>
<dbReference type="EMBL" id="CH408030">
    <property type="protein sequence ID" value="EAQ90443.1"/>
    <property type="status" value="ALT_SEQ"/>
    <property type="molecule type" value="Genomic_DNA"/>
</dbReference>
<dbReference type="RefSeq" id="XP_001228890.1">
    <property type="nucleotide sequence ID" value="XM_001228889.1"/>
</dbReference>
<dbReference type="RefSeq" id="XP_001228891.1">
    <property type="nucleotide sequence ID" value="XM_001228890.1"/>
</dbReference>
<dbReference type="RefSeq" id="XP_001228892.1">
    <property type="nucleotide sequence ID" value="XM_001228891.1"/>
</dbReference>
<dbReference type="RefSeq" id="XP_001228893.1">
    <property type="nucleotide sequence ID" value="XM_001228892.1"/>
</dbReference>
<dbReference type="RefSeq" id="XP_001228894.1">
    <property type="nucleotide sequence ID" value="XM_001228893.1"/>
</dbReference>
<dbReference type="STRING" id="306901.Q2HBM6"/>
<dbReference type="GeneID" id="4389928"/>
<dbReference type="GeneID" id="4389929"/>
<dbReference type="GeneID" id="4389930"/>
<dbReference type="GeneID" id="4389931"/>
<dbReference type="GeneID" id="4389932"/>
<dbReference type="VEuPathDB" id="FungiDB:CHGG_02374"/>
<dbReference type="VEuPathDB" id="FungiDB:CHGG_02375"/>
<dbReference type="VEuPathDB" id="FungiDB:CHGG_02376"/>
<dbReference type="VEuPathDB" id="FungiDB:CHGG_02377"/>
<dbReference type="VEuPathDB" id="FungiDB:CHGG_02378"/>
<dbReference type="VEuPathDB" id="FungiDB:CHGG_04475"/>
<dbReference type="VEuPathDB" id="FungiDB:CHGG_05286"/>
<dbReference type="VEuPathDB" id="FungiDB:CHGG_05358"/>
<dbReference type="eggNOG" id="KOG1178">
    <property type="taxonomic scope" value="Eukaryota"/>
</dbReference>
<dbReference type="eggNOG" id="KOG1202">
    <property type="taxonomic scope" value="Eukaryota"/>
</dbReference>
<dbReference type="HOGENOM" id="CLU_000022_35_7_1"/>
<dbReference type="InParanoid" id="Q2HBN0"/>
<dbReference type="OrthoDB" id="5244741at2759"/>
<dbReference type="Proteomes" id="UP000001056">
    <property type="component" value="Unassembled WGS sequence"/>
</dbReference>
<dbReference type="GO" id="GO:0004315">
    <property type="term" value="F:3-oxoacyl-[acyl-carrier-protein] synthase activity"/>
    <property type="evidence" value="ECO:0007669"/>
    <property type="project" value="InterPro"/>
</dbReference>
<dbReference type="GO" id="GO:0004312">
    <property type="term" value="F:fatty acid synthase activity"/>
    <property type="evidence" value="ECO:0007669"/>
    <property type="project" value="TreeGrafter"/>
</dbReference>
<dbReference type="GO" id="GO:0016874">
    <property type="term" value="F:ligase activity"/>
    <property type="evidence" value="ECO:0007669"/>
    <property type="project" value="UniProtKB-KW"/>
</dbReference>
<dbReference type="GO" id="GO:0008168">
    <property type="term" value="F:methyltransferase activity"/>
    <property type="evidence" value="ECO:0007669"/>
    <property type="project" value="UniProtKB-KW"/>
</dbReference>
<dbReference type="GO" id="GO:0016491">
    <property type="term" value="F:oxidoreductase activity"/>
    <property type="evidence" value="ECO:0007669"/>
    <property type="project" value="UniProtKB-KW"/>
</dbReference>
<dbReference type="GO" id="GO:0031177">
    <property type="term" value="F:phosphopantetheine binding"/>
    <property type="evidence" value="ECO:0007669"/>
    <property type="project" value="InterPro"/>
</dbReference>
<dbReference type="GO" id="GO:0006633">
    <property type="term" value="P:fatty acid biosynthetic process"/>
    <property type="evidence" value="ECO:0007669"/>
    <property type="project" value="InterPro"/>
</dbReference>
<dbReference type="GO" id="GO:0032259">
    <property type="term" value="P:methylation"/>
    <property type="evidence" value="ECO:0007669"/>
    <property type="project" value="UniProtKB-KW"/>
</dbReference>
<dbReference type="GO" id="GO:0009403">
    <property type="term" value="P:toxin biosynthetic process"/>
    <property type="evidence" value="ECO:0007669"/>
    <property type="project" value="UniProtKB-ARBA"/>
</dbReference>
<dbReference type="CDD" id="cd05930">
    <property type="entry name" value="A_NRPS"/>
    <property type="match status" value="1"/>
</dbReference>
<dbReference type="CDD" id="cd19532">
    <property type="entry name" value="C_PKS-NRPS"/>
    <property type="match status" value="1"/>
</dbReference>
<dbReference type="CDD" id="cd00833">
    <property type="entry name" value="PKS"/>
    <property type="match status" value="1"/>
</dbReference>
<dbReference type="FunFam" id="3.40.47.10:FF:000019">
    <property type="entry name" value="Polyketide synthase type I"/>
    <property type="match status" value="1"/>
</dbReference>
<dbReference type="Gene3D" id="3.30.300.30">
    <property type="match status" value="1"/>
</dbReference>
<dbReference type="Gene3D" id="3.30.70.3290">
    <property type="match status" value="1"/>
</dbReference>
<dbReference type="Gene3D" id="3.40.47.10">
    <property type="match status" value="1"/>
</dbReference>
<dbReference type="Gene3D" id="1.10.1200.10">
    <property type="entry name" value="ACP-like"/>
    <property type="match status" value="2"/>
</dbReference>
<dbReference type="Gene3D" id="3.30.559.10">
    <property type="entry name" value="Chloramphenicol acetyltransferase-like domain"/>
    <property type="match status" value="1"/>
</dbReference>
<dbReference type="Gene3D" id="3.40.366.10">
    <property type="entry name" value="Malonyl-Coenzyme A Acyl Carrier Protein, domain 2"/>
    <property type="match status" value="1"/>
</dbReference>
<dbReference type="Gene3D" id="3.40.50.12780">
    <property type="entry name" value="N-terminal domain of ligase-like"/>
    <property type="match status" value="1"/>
</dbReference>
<dbReference type="Gene3D" id="3.40.50.720">
    <property type="entry name" value="NAD(P)-binding Rossmann-like Domain"/>
    <property type="match status" value="3"/>
</dbReference>
<dbReference type="Gene3D" id="3.30.559.30">
    <property type="entry name" value="Nonribosomal peptide synthetase, condensation domain"/>
    <property type="match status" value="1"/>
</dbReference>
<dbReference type="Gene3D" id="3.10.129.110">
    <property type="entry name" value="Polyketide synthase dehydratase"/>
    <property type="match status" value="1"/>
</dbReference>
<dbReference type="Gene3D" id="3.40.50.150">
    <property type="entry name" value="Vaccinia Virus protein VP39"/>
    <property type="match status" value="1"/>
</dbReference>
<dbReference type="InterPro" id="IPR001227">
    <property type="entry name" value="Ac_transferase_dom_sf"/>
</dbReference>
<dbReference type="InterPro" id="IPR036736">
    <property type="entry name" value="ACP-like_sf"/>
</dbReference>
<dbReference type="InterPro" id="IPR014043">
    <property type="entry name" value="Acyl_transferase_dom"/>
</dbReference>
<dbReference type="InterPro" id="IPR016035">
    <property type="entry name" value="Acyl_Trfase/lysoPLipase"/>
</dbReference>
<dbReference type="InterPro" id="IPR045851">
    <property type="entry name" value="AMP-bd_C_sf"/>
</dbReference>
<dbReference type="InterPro" id="IPR020845">
    <property type="entry name" value="AMP-binding_CS"/>
</dbReference>
<dbReference type="InterPro" id="IPR000873">
    <property type="entry name" value="AMP-dep_synth/lig_dom"/>
</dbReference>
<dbReference type="InterPro" id="IPR042099">
    <property type="entry name" value="ANL_N_sf"/>
</dbReference>
<dbReference type="InterPro" id="IPR023213">
    <property type="entry name" value="CAT-like_dom_sf"/>
</dbReference>
<dbReference type="InterPro" id="IPR001242">
    <property type="entry name" value="Condensatn"/>
</dbReference>
<dbReference type="InterPro" id="IPR013120">
    <property type="entry name" value="Far_NAD-bd"/>
</dbReference>
<dbReference type="InterPro" id="IPR018201">
    <property type="entry name" value="Ketoacyl_synth_AS"/>
</dbReference>
<dbReference type="InterPro" id="IPR014031">
    <property type="entry name" value="Ketoacyl_synth_C"/>
</dbReference>
<dbReference type="InterPro" id="IPR014030">
    <property type="entry name" value="Ketoacyl_synth_N"/>
</dbReference>
<dbReference type="InterPro" id="IPR016036">
    <property type="entry name" value="Malonyl_transacylase_ACP-bd"/>
</dbReference>
<dbReference type="InterPro" id="IPR013217">
    <property type="entry name" value="Methyltransf_12"/>
</dbReference>
<dbReference type="InterPro" id="IPR036291">
    <property type="entry name" value="NAD(P)-bd_dom_sf"/>
</dbReference>
<dbReference type="InterPro" id="IPR032821">
    <property type="entry name" value="PKS_assoc"/>
</dbReference>
<dbReference type="InterPro" id="IPR020841">
    <property type="entry name" value="PKS_Beta-ketoAc_synthase_dom"/>
</dbReference>
<dbReference type="InterPro" id="IPR042104">
    <property type="entry name" value="PKS_dehydratase_sf"/>
</dbReference>
<dbReference type="InterPro" id="IPR020807">
    <property type="entry name" value="PKS_DH"/>
</dbReference>
<dbReference type="InterPro" id="IPR049551">
    <property type="entry name" value="PKS_DH_C"/>
</dbReference>
<dbReference type="InterPro" id="IPR049552">
    <property type="entry name" value="PKS_DH_N"/>
</dbReference>
<dbReference type="InterPro" id="IPR013968">
    <property type="entry name" value="PKS_KR"/>
</dbReference>
<dbReference type="InterPro" id="IPR049900">
    <property type="entry name" value="PKS_mFAS_DH"/>
</dbReference>
<dbReference type="InterPro" id="IPR050091">
    <property type="entry name" value="PKS_NRPS_Biosynth_Enz"/>
</dbReference>
<dbReference type="InterPro" id="IPR020806">
    <property type="entry name" value="PKS_PP-bd"/>
</dbReference>
<dbReference type="InterPro" id="IPR009081">
    <property type="entry name" value="PP-bd_ACP"/>
</dbReference>
<dbReference type="InterPro" id="IPR006162">
    <property type="entry name" value="Ppantetheine_attach_site"/>
</dbReference>
<dbReference type="InterPro" id="IPR029063">
    <property type="entry name" value="SAM-dependent_MTases_sf"/>
</dbReference>
<dbReference type="InterPro" id="IPR016039">
    <property type="entry name" value="Thiolase-like"/>
</dbReference>
<dbReference type="PANTHER" id="PTHR43775">
    <property type="entry name" value="FATTY ACID SYNTHASE"/>
    <property type="match status" value="1"/>
</dbReference>
<dbReference type="PANTHER" id="PTHR43775:SF20">
    <property type="entry name" value="HYBRID PKS-NRPS SYNTHETASE APDA"/>
    <property type="match status" value="1"/>
</dbReference>
<dbReference type="Pfam" id="PF00698">
    <property type="entry name" value="Acyl_transf_1"/>
    <property type="match status" value="1"/>
</dbReference>
<dbReference type="Pfam" id="PF00501">
    <property type="entry name" value="AMP-binding"/>
    <property type="match status" value="1"/>
</dbReference>
<dbReference type="Pfam" id="PF00668">
    <property type="entry name" value="Condensation"/>
    <property type="match status" value="1"/>
</dbReference>
<dbReference type="Pfam" id="PF16197">
    <property type="entry name" value="KAsynt_C_assoc"/>
    <property type="match status" value="1"/>
</dbReference>
<dbReference type="Pfam" id="PF00109">
    <property type="entry name" value="ketoacyl-synt"/>
    <property type="match status" value="1"/>
</dbReference>
<dbReference type="Pfam" id="PF02801">
    <property type="entry name" value="Ketoacyl-synt_C"/>
    <property type="match status" value="1"/>
</dbReference>
<dbReference type="Pfam" id="PF08659">
    <property type="entry name" value="KR"/>
    <property type="match status" value="1"/>
</dbReference>
<dbReference type="Pfam" id="PF08242">
    <property type="entry name" value="Methyltransf_12"/>
    <property type="match status" value="1"/>
</dbReference>
<dbReference type="Pfam" id="PF07993">
    <property type="entry name" value="NAD_binding_4"/>
    <property type="match status" value="1"/>
</dbReference>
<dbReference type="Pfam" id="PF21089">
    <property type="entry name" value="PKS_DH_N"/>
    <property type="match status" value="1"/>
</dbReference>
<dbReference type="Pfam" id="PF00550">
    <property type="entry name" value="PP-binding"/>
    <property type="match status" value="2"/>
</dbReference>
<dbReference type="Pfam" id="PF14765">
    <property type="entry name" value="PS-DH"/>
    <property type="match status" value="1"/>
</dbReference>
<dbReference type="SMART" id="SM00827">
    <property type="entry name" value="PKS_AT"/>
    <property type="match status" value="1"/>
</dbReference>
<dbReference type="SMART" id="SM00826">
    <property type="entry name" value="PKS_DH"/>
    <property type="match status" value="1"/>
</dbReference>
<dbReference type="SMART" id="SM00825">
    <property type="entry name" value="PKS_KS"/>
    <property type="match status" value="1"/>
</dbReference>
<dbReference type="SMART" id="SM00823">
    <property type="entry name" value="PKS_PP"/>
    <property type="match status" value="2"/>
</dbReference>
<dbReference type="SUPFAM" id="SSF56801">
    <property type="entry name" value="Acetyl-CoA synthetase-like"/>
    <property type="match status" value="1"/>
</dbReference>
<dbReference type="SUPFAM" id="SSF47336">
    <property type="entry name" value="ACP-like"/>
    <property type="match status" value="2"/>
</dbReference>
<dbReference type="SUPFAM" id="SSF52777">
    <property type="entry name" value="CoA-dependent acyltransferases"/>
    <property type="match status" value="2"/>
</dbReference>
<dbReference type="SUPFAM" id="SSF52151">
    <property type="entry name" value="FabD/lysophospholipase-like"/>
    <property type="match status" value="1"/>
</dbReference>
<dbReference type="SUPFAM" id="SSF51735">
    <property type="entry name" value="NAD(P)-binding Rossmann-fold domains"/>
    <property type="match status" value="3"/>
</dbReference>
<dbReference type="SUPFAM" id="SSF55048">
    <property type="entry name" value="Probable ACP-binding domain of malonyl-CoA ACP transacylase"/>
    <property type="match status" value="1"/>
</dbReference>
<dbReference type="SUPFAM" id="SSF53335">
    <property type="entry name" value="S-adenosyl-L-methionine-dependent methyltransferases"/>
    <property type="match status" value="1"/>
</dbReference>
<dbReference type="SUPFAM" id="SSF53901">
    <property type="entry name" value="Thiolase-like"/>
    <property type="match status" value="1"/>
</dbReference>
<dbReference type="PROSITE" id="PS00455">
    <property type="entry name" value="AMP_BINDING"/>
    <property type="match status" value="1"/>
</dbReference>
<dbReference type="PROSITE" id="PS50075">
    <property type="entry name" value="CARRIER"/>
    <property type="match status" value="2"/>
</dbReference>
<dbReference type="PROSITE" id="PS00606">
    <property type="entry name" value="KS3_1"/>
    <property type="match status" value="1"/>
</dbReference>
<dbReference type="PROSITE" id="PS52004">
    <property type="entry name" value="KS3_2"/>
    <property type="match status" value="1"/>
</dbReference>
<dbReference type="PROSITE" id="PS00012">
    <property type="entry name" value="PHOSPHOPANTETHEINE"/>
    <property type="match status" value="1"/>
</dbReference>
<dbReference type="PROSITE" id="PS52019">
    <property type="entry name" value="PKS_MFAS_DH"/>
    <property type="match status" value="1"/>
</dbReference>